<gene>
    <name evidence="1" type="primary">rpsE</name>
    <name type="ordered locus">THA_1232</name>
</gene>
<comment type="function">
    <text evidence="1">With S4 and S12 plays an important role in translational accuracy.</text>
</comment>
<comment type="function">
    <text evidence="1">Located at the back of the 30S subunit body where it stabilizes the conformation of the head with respect to the body.</text>
</comment>
<comment type="subunit">
    <text evidence="1">Part of the 30S ribosomal subunit. Contacts proteins S4 and S8.</text>
</comment>
<comment type="domain">
    <text>The N-terminal domain interacts with the head of the 30S subunit; the C-terminal domain interacts with the body and contacts protein S4. The interaction surface between S4 and S5 is involved in control of translational fidelity.</text>
</comment>
<comment type="similarity">
    <text evidence="1">Belongs to the universal ribosomal protein uS5 family.</text>
</comment>
<name>RS5_THEAB</name>
<evidence type="ECO:0000255" key="1">
    <source>
        <dbReference type="HAMAP-Rule" id="MF_01307"/>
    </source>
</evidence>
<evidence type="ECO:0000305" key="2"/>
<feature type="chain" id="PRO_1000140898" description="Small ribosomal subunit protein uS5">
    <location>
        <begin position="1"/>
        <end position="176"/>
    </location>
</feature>
<feature type="domain" description="S5 DRBM" evidence="1">
    <location>
        <begin position="15"/>
        <end position="78"/>
    </location>
</feature>
<dbReference type="EMBL" id="CP001185">
    <property type="protein sequence ID" value="ACJ75677.1"/>
    <property type="molecule type" value="Genomic_DNA"/>
</dbReference>
<dbReference type="RefSeq" id="WP_004101468.1">
    <property type="nucleotide sequence ID" value="NC_011653.1"/>
</dbReference>
<dbReference type="SMR" id="B7IHW3"/>
<dbReference type="STRING" id="484019.THA_1232"/>
<dbReference type="KEGG" id="taf:THA_1232"/>
<dbReference type="eggNOG" id="COG0098">
    <property type="taxonomic scope" value="Bacteria"/>
</dbReference>
<dbReference type="HOGENOM" id="CLU_065898_2_2_0"/>
<dbReference type="OrthoDB" id="9809045at2"/>
<dbReference type="Proteomes" id="UP000002453">
    <property type="component" value="Chromosome"/>
</dbReference>
<dbReference type="GO" id="GO:0015935">
    <property type="term" value="C:small ribosomal subunit"/>
    <property type="evidence" value="ECO:0007669"/>
    <property type="project" value="InterPro"/>
</dbReference>
<dbReference type="GO" id="GO:0019843">
    <property type="term" value="F:rRNA binding"/>
    <property type="evidence" value="ECO:0007669"/>
    <property type="project" value="UniProtKB-UniRule"/>
</dbReference>
<dbReference type="GO" id="GO:0003735">
    <property type="term" value="F:structural constituent of ribosome"/>
    <property type="evidence" value="ECO:0007669"/>
    <property type="project" value="InterPro"/>
</dbReference>
<dbReference type="GO" id="GO:0006412">
    <property type="term" value="P:translation"/>
    <property type="evidence" value="ECO:0007669"/>
    <property type="project" value="UniProtKB-UniRule"/>
</dbReference>
<dbReference type="FunFam" id="3.30.160.20:FF:000001">
    <property type="entry name" value="30S ribosomal protein S5"/>
    <property type="match status" value="1"/>
</dbReference>
<dbReference type="FunFam" id="3.30.230.10:FF:000002">
    <property type="entry name" value="30S ribosomal protein S5"/>
    <property type="match status" value="1"/>
</dbReference>
<dbReference type="Gene3D" id="3.30.160.20">
    <property type="match status" value="1"/>
</dbReference>
<dbReference type="Gene3D" id="3.30.230.10">
    <property type="match status" value="1"/>
</dbReference>
<dbReference type="HAMAP" id="MF_01307_B">
    <property type="entry name" value="Ribosomal_uS5_B"/>
    <property type="match status" value="1"/>
</dbReference>
<dbReference type="InterPro" id="IPR020568">
    <property type="entry name" value="Ribosomal_Su5_D2-typ_SF"/>
</dbReference>
<dbReference type="InterPro" id="IPR000851">
    <property type="entry name" value="Ribosomal_uS5"/>
</dbReference>
<dbReference type="InterPro" id="IPR005712">
    <property type="entry name" value="Ribosomal_uS5_bac-type"/>
</dbReference>
<dbReference type="InterPro" id="IPR005324">
    <property type="entry name" value="Ribosomal_uS5_C"/>
</dbReference>
<dbReference type="InterPro" id="IPR013810">
    <property type="entry name" value="Ribosomal_uS5_N"/>
</dbReference>
<dbReference type="InterPro" id="IPR018192">
    <property type="entry name" value="Ribosomal_uS5_N_CS"/>
</dbReference>
<dbReference type="InterPro" id="IPR014721">
    <property type="entry name" value="Ribsml_uS5_D2-typ_fold_subgr"/>
</dbReference>
<dbReference type="NCBIfam" id="TIGR01021">
    <property type="entry name" value="rpsE_bact"/>
    <property type="match status" value="1"/>
</dbReference>
<dbReference type="PANTHER" id="PTHR48277">
    <property type="entry name" value="MITOCHONDRIAL RIBOSOMAL PROTEIN S5"/>
    <property type="match status" value="1"/>
</dbReference>
<dbReference type="PANTHER" id="PTHR48277:SF1">
    <property type="entry name" value="MITOCHONDRIAL RIBOSOMAL PROTEIN S5"/>
    <property type="match status" value="1"/>
</dbReference>
<dbReference type="Pfam" id="PF00333">
    <property type="entry name" value="Ribosomal_S5"/>
    <property type="match status" value="1"/>
</dbReference>
<dbReference type="Pfam" id="PF03719">
    <property type="entry name" value="Ribosomal_S5_C"/>
    <property type="match status" value="1"/>
</dbReference>
<dbReference type="SUPFAM" id="SSF54768">
    <property type="entry name" value="dsRNA-binding domain-like"/>
    <property type="match status" value="1"/>
</dbReference>
<dbReference type="SUPFAM" id="SSF54211">
    <property type="entry name" value="Ribosomal protein S5 domain 2-like"/>
    <property type="match status" value="1"/>
</dbReference>
<dbReference type="PROSITE" id="PS00585">
    <property type="entry name" value="RIBOSOMAL_S5"/>
    <property type="match status" value="1"/>
</dbReference>
<dbReference type="PROSITE" id="PS50881">
    <property type="entry name" value="S5_DSRBD"/>
    <property type="match status" value="1"/>
</dbReference>
<accession>B7IHW3</accession>
<reference key="1">
    <citation type="journal article" date="2009" name="J. Bacteriol.">
        <title>The genome of Thermosipho africanus TCF52B: lateral genetic connections to the Firmicutes and Archaea.</title>
        <authorList>
            <person name="Nesboe C.L."/>
            <person name="Bapteste E."/>
            <person name="Curtis B."/>
            <person name="Dahle H."/>
            <person name="Lopez P."/>
            <person name="Macleod D."/>
            <person name="Dlutek M."/>
            <person name="Bowman S."/>
            <person name="Zhaxybayeva O."/>
            <person name="Birkeland N.-K."/>
            <person name="Doolittle W.F."/>
        </authorList>
    </citation>
    <scope>NUCLEOTIDE SEQUENCE [LARGE SCALE GENOMIC DNA]</scope>
    <source>
        <strain>TCF52B</strain>
    </source>
</reference>
<keyword id="KW-1185">Reference proteome</keyword>
<keyword id="KW-0687">Ribonucleoprotein</keyword>
<keyword id="KW-0689">Ribosomal protein</keyword>
<keyword id="KW-0694">RNA-binding</keyword>
<keyword id="KW-0699">rRNA-binding</keyword>
<protein>
    <recommendedName>
        <fullName evidence="1">Small ribosomal subunit protein uS5</fullName>
    </recommendedName>
    <alternativeName>
        <fullName evidence="2">30S ribosomal protein S5</fullName>
    </alternativeName>
</protein>
<organism>
    <name type="scientific">Thermosipho africanus (strain TCF52B)</name>
    <dbReference type="NCBI Taxonomy" id="484019"/>
    <lineage>
        <taxon>Bacteria</taxon>
        <taxon>Thermotogati</taxon>
        <taxon>Thermotogota</taxon>
        <taxon>Thermotogae</taxon>
        <taxon>Thermotogales</taxon>
        <taxon>Fervidobacteriaceae</taxon>
        <taxon>Thermosipho</taxon>
    </lineage>
</organism>
<proteinExistence type="inferred from homology"/>
<sequence>MADIAQKIRNTREDFEERIVEIRRTTKVTKGGKNLSFRVLAVVGNRNGKVGVGVGKAREVPDAIRKALSAARRNVFEVPIYNGTIPHEIVGRQDAAKVLLKPAAPGTGIISNGTVRAVVELAGIHNILTKTSGSTNPVVLAQATVNGLKNLLSLEKIAQLRDITPQEVIYGVKKEG</sequence>